<gene>
    <name type="primary">HGS</name>
</gene>
<protein>
    <recommendedName>
        <fullName>Hepatocyte growth factor-regulated tyrosine kinase substrate</fullName>
    </recommendedName>
</protein>
<evidence type="ECO:0000250" key="1"/>
<evidence type="ECO:0000250" key="2">
    <source>
        <dbReference type="UniProtKB" id="O14964"/>
    </source>
</evidence>
<evidence type="ECO:0000250" key="3">
    <source>
        <dbReference type="UniProtKB" id="Q99LI8"/>
    </source>
</evidence>
<evidence type="ECO:0000250" key="4">
    <source>
        <dbReference type="UniProtKB" id="Q9JJ50"/>
    </source>
</evidence>
<evidence type="ECO:0000255" key="5">
    <source>
        <dbReference type="PROSITE-ProRule" id="PRU00091"/>
    </source>
</evidence>
<evidence type="ECO:0000255" key="6">
    <source>
        <dbReference type="PROSITE-ProRule" id="PRU00213"/>
    </source>
</evidence>
<evidence type="ECO:0000255" key="7">
    <source>
        <dbReference type="PROSITE-ProRule" id="PRU00218"/>
    </source>
</evidence>
<evidence type="ECO:0000256" key="8">
    <source>
        <dbReference type="SAM" id="MobiDB-lite"/>
    </source>
</evidence>
<evidence type="ECO:0000305" key="9"/>
<proteinExistence type="evidence at transcript level"/>
<name>HGS_BOVIN</name>
<sequence length="777" mass="85786">MGRGSGTFERLLDKATSQLLLETDWESILQICDLIRQGDTQAKYAVSSIKKKVNDKNPHVALYALEVMESVVKNCGQTVHDEVANKQTMEELKDLLKRQVEVNVRNKILYLIQAWAHAFRNEPKYKVVQDTYQIMKVEGHVFPEFKESDAMFAAERAPDWVDAEECHRCRVQFGVMTRKHHCRACGQIFCGKCSSKYSTIPKFGIEKEVRVCEPCFEQLNKKAEGKAASTTELPPEYLTSPLSQQSQLPPKRDETALQEEEELQLALALSQSEAEEKERMRQKSAYTAYPKAEPTPVASSAPPASSLYSSPVNSSAPLAEDIDPELARYLNRNYWEKKQEEARKSPTPSAPVPLTEPTAQPGEGHAIPANVETSLPETDPQAVTAAGAAFSEQYQNGESEESHAQFLKALQNAVTTFVNRMKSNHVRGRSITNDSAVLSLFQSINTMHPQLLELLNQLDERRLYYEGLQDKLAQIRDARGALSALREEHREKLRRAAEEAERQRQIQLAQKLEIMRQKKQEYLEVQRQLAIQRLQEQEKERQMRLEQQKQTIQMRAQMPAFSLPYAQLQAMPAAGGVLYQPSGPASFAGTFSPAGSVEGSPMHTMYMSQPAPAASGPYPSMPAAAADPSMVSAYMYPAGAAGAQAAAQGPAGPTTSPAYSSYQPTPTQGYQTVASQAPQSLPAISQPPQSGTMGYMGSQSVSMGYQPYSMQNLMPTLPGQDAPLPPPQQPYISGQQPVYQQMAPSSGPPQQQPPVAQQPPAQGPPAQGSEAQLISFD</sequence>
<dbReference type="EMBL" id="BT026148">
    <property type="protein sequence ID" value="ABG66987.1"/>
    <property type="molecule type" value="mRNA"/>
</dbReference>
<dbReference type="EMBL" id="BC111313">
    <property type="protein sequence ID" value="AAI11314.1"/>
    <property type="molecule type" value="mRNA"/>
</dbReference>
<dbReference type="RefSeq" id="NP_001039554.1">
    <property type="nucleotide sequence ID" value="NM_001046089.1"/>
</dbReference>
<dbReference type="RefSeq" id="XP_005221090.1">
    <property type="nucleotide sequence ID" value="XM_005221033.5"/>
</dbReference>
<dbReference type="SMR" id="Q0V8S0"/>
<dbReference type="FunCoup" id="Q0V8S0">
    <property type="interactions" value="3711"/>
</dbReference>
<dbReference type="STRING" id="9913.ENSBTAP00000000527"/>
<dbReference type="PaxDb" id="9913-ENSBTAP00000000527"/>
<dbReference type="PeptideAtlas" id="Q0V8S0"/>
<dbReference type="GeneID" id="511582"/>
<dbReference type="KEGG" id="bta:511582"/>
<dbReference type="CTD" id="9146"/>
<dbReference type="VEuPathDB" id="HostDB:ENSBTAG00000000411"/>
<dbReference type="eggNOG" id="KOG1818">
    <property type="taxonomic scope" value="Eukaryota"/>
</dbReference>
<dbReference type="HOGENOM" id="CLU_013062_1_0_1"/>
<dbReference type="InParanoid" id="Q0V8S0"/>
<dbReference type="OMA" id="CGHKIHA"/>
<dbReference type="OrthoDB" id="957735at2759"/>
<dbReference type="TreeFam" id="TF314470"/>
<dbReference type="Reactome" id="R-BTA-182971">
    <property type="pathway name" value="EGFR downregulation"/>
</dbReference>
<dbReference type="Reactome" id="R-BTA-432720">
    <property type="pathway name" value="Lysosome Vesicle Biogenesis"/>
</dbReference>
<dbReference type="Reactome" id="R-BTA-5689880">
    <property type="pathway name" value="Ub-specific processing proteases"/>
</dbReference>
<dbReference type="Reactome" id="R-BTA-6807004">
    <property type="pathway name" value="Negative regulation of MET activity"/>
</dbReference>
<dbReference type="Reactome" id="R-BTA-8856825">
    <property type="pathway name" value="Cargo recognition for clathrin-mediated endocytosis"/>
</dbReference>
<dbReference type="Reactome" id="R-BTA-8856828">
    <property type="pathway name" value="Clathrin-mediated endocytosis"/>
</dbReference>
<dbReference type="Reactome" id="R-BTA-9013420">
    <property type="pathway name" value="RHOU GTPase cycle"/>
</dbReference>
<dbReference type="Reactome" id="R-BTA-917729">
    <property type="pathway name" value="Endosomal Sorting Complex Required For Transport (ESCRT)"/>
</dbReference>
<dbReference type="Reactome" id="R-BTA-9706019">
    <property type="pathway name" value="RHOBTB3 ATPase cycle"/>
</dbReference>
<dbReference type="Proteomes" id="UP000009136">
    <property type="component" value="Chromosome 19"/>
</dbReference>
<dbReference type="Bgee" id="ENSBTAG00000000411">
    <property type="expression patterns" value="Expressed in retina and 105 other cell types or tissues"/>
</dbReference>
<dbReference type="GO" id="GO:0005769">
    <property type="term" value="C:early endosome"/>
    <property type="evidence" value="ECO:0000318"/>
    <property type="project" value="GO_Central"/>
</dbReference>
<dbReference type="GO" id="GO:0031901">
    <property type="term" value="C:early endosome membrane"/>
    <property type="evidence" value="ECO:0007669"/>
    <property type="project" value="UniProtKB-SubCell"/>
</dbReference>
<dbReference type="GO" id="GO:0032585">
    <property type="term" value="C:multivesicular body membrane"/>
    <property type="evidence" value="ECO:0007669"/>
    <property type="project" value="UniProtKB-SubCell"/>
</dbReference>
<dbReference type="GO" id="GO:0035091">
    <property type="term" value="F:phosphatidylinositol binding"/>
    <property type="evidence" value="ECO:0007669"/>
    <property type="project" value="InterPro"/>
</dbReference>
<dbReference type="GO" id="GO:0043130">
    <property type="term" value="F:ubiquitin binding"/>
    <property type="evidence" value="ECO:0000318"/>
    <property type="project" value="GO_Central"/>
</dbReference>
<dbReference type="GO" id="GO:0008270">
    <property type="term" value="F:zinc ion binding"/>
    <property type="evidence" value="ECO:0007669"/>
    <property type="project" value="UniProtKB-KW"/>
</dbReference>
<dbReference type="GO" id="GO:0032456">
    <property type="term" value="P:endocytic recycling"/>
    <property type="evidence" value="ECO:0000318"/>
    <property type="project" value="GO_Central"/>
</dbReference>
<dbReference type="GO" id="GO:0015031">
    <property type="term" value="P:protein transport"/>
    <property type="evidence" value="ECO:0007669"/>
    <property type="project" value="UniProtKB-KW"/>
</dbReference>
<dbReference type="GO" id="GO:0031623">
    <property type="term" value="P:receptor internalization"/>
    <property type="evidence" value="ECO:0000318"/>
    <property type="project" value="GO_Central"/>
</dbReference>
<dbReference type="CDD" id="cd15720">
    <property type="entry name" value="FYVE_Hrs"/>
    <property type="match status" value="1"/>
</dbReference>
<dbReference type="CDD" id="cd21387">
    <property type="entry name" value="GAT_Hrs"/>
    <property type="match status" value="1"/>
</dbReference>
<dbReference type="CDD" id="cd03569">
    <property type="entry name" value="VHS_Hrs"/>
    <property type="match status" value="1"/>
</dbReference>
<dbReference type="FunFam" id="1.20.5.1940:FF:000003">
    <property type="entry name" value="Hepatocyte growth factor-regulated tyrosine kinase substrate"/>
    <property type="match status" value="1"/>
</dbReference>
<dbReference type="FunFam" id="1.25.40.90:FF:000014">
    <property type="entry name" value="Hepatocyte growth factor-regulated tyrosine kinase substrate"/>
    <property type="match status" value="1"/>
</dbReference>
<dbReference type="FunFam" id="3.30.40.10:FF:000028">
    <property type="entry name" value="Putative hepatocyte growth factor-regulated tyrosine kinase substrate"/>
    <property type="match status" value="1"/>
</dbReference>
<dbReference type="Gene3D" id="1.20.5.1940">
    <property type="match status" value="1"/>
</dbReference>
<dbReference type="Gene3D" id="1.25.40.90">
    <property type="match status" value="1"/>
</dbReference>
<dbReference type="Gene3D" id="3.30.40.10">
    <property type="entry name" value="Zinc/RING finger domain, C3HC4 (zinc finger)"/>
    <property type="match status" value="1"/>
</dbReference>
<dbReference type="InterPro" id="IPR008942">
    <property type="entry name" value="ENTH_VHS"/>
</dbReference>
<dbReference type="InterPro" id="IPR017073">
    <property type="entry name" value="HGS/VPS27"/>
</dbReference>
<dbReference type="InterPro" id="IPR024641">
    <property type="entry name" value="HRS_helical"/>
</dbReference>
<dbReference type="InterPro" id="IPR003903">
    <property type="entry name" value="UIM_dom"/>
</dbReference>
<dbReference type="InterPro" id="IPR002014">
    <property type="entry name" value="VHS_dom"/>
</dbReference>
<dbReference type="InterPro" id="IPR000306">
    <property type="entry name" value="Znf_FYVE"/>
</dbReference>
<dbReference type="InterPro" id="IPR017455">
    <property type="entry name" value="Znf_FYVE-rel"/>
</dbReference>
<dbReference type="InterPro" id="IPR011011">
    <property type="entry name" value="Znf_FYVE_PHD"/>
</dbReference>
<dbReference type="InterPro" id="IPR013083">
    <property type="entry name" value="Znf_RING/FYVE/PHD"/>
</dbReference>
<dbReference type="PANTHER" id="PTHR46275">
    <property type="entry name" value="HEPATOCYTE GROWTH FACTOR-REGULATED TYROSINE KINASE SUBSTRATE"/>
    <property type="match status" value="1"/>
</dbReference>
<dbReference type="PANTHER" id="PTHR46275:SF1">
    <property type="entry name" value="HEPATOCYTE GROWTH FACTOR-REGULATED TYROSINE KINASE SUBSTRATE"/>
    <property type="match status" value="1"/>
</dbReference>
<dbReference type="Pfam" id="PF01363">
    <property type="entry name" value="FYVE"/>
    <property type="match status" value="1"/>
</dbReference>
<dbReference type="Pfam" id="PF12210">
    <property type="entry name" value="Hrs_helical"/>
    <property type="match status" value="1"/>
</dbReference>
<dbReference type="Pfam" id="PF00790">
    <property type="entry name" value="VHS"/>
    <property type="match status" value="1"/>
</dbReference>
<dbReference type="PIRSF" id="PIRSF036956">
    <property type="entry name" value="Hrs_Vps27"/>
    <property type="match status" value="1"/>
</dbReference>
<dbReference type="SMART" id="SM00064">
    <property type="entry name" value="FYVE"/>
    <property type="match status" value="1"/>
</dbReference>
<dbReference type="SMART" id="SM00288">
    <property type="entry name" value="VHS"/>
    <property type="match status" value="1"/>
</dbReference>
<dbReference type="SUPFAM" id="SSF48464">
    <property type="entry name" value="ENTH/VHS domain"/>
    <property type="match status" value="1"/>
</dbReference>
<dbReference type="SUPFAM" id="SSF57903">
    <property type="entry name" value="FYVE/PHD zinc finger"/>
    <property type="match status" value="1"/>
</dbReference>
<dbReference type="PROSITE" id="PS50330">
    <property type="entry name" value="UIM"/>
    <property type="match status" value="1"/>
</dbReference>
<dbReference type="PROSITE" id="PS50179">
    <property type="entry name" value="VHS"/>
    <property type="match status" value="1"/>
</dbReference>
<dbReference type="PROSITE" id="PS50178">
    <property type="entry name" value="ZF_FYVE"/>
    <property type="match status" value="1"/>
</dbReference>
<accession>Q0V8S0</accession>
<accession>Q2NKZ6</accession>
<organism>
    <name type="scientific">Bos taurus</name>
    <name type="common">Bovine</name>
    <dbReference type="NCBI Taxonomy" id="9913"/>
    <lineage>
        <taxon>Eukaryota</taxon>
        <taxon>Metazoa</taxon>
        <taxon>Chordata</taxon>
        <taxon>Craniata</taxon>
        <taxon>Vertebrata</taxon>
        <taxon>Euteleostomi</taxon>
        <taxon>Mammalia</taxon>
        <taxon>Eutheria</taxon>
        <taxon>Laurasiatheria</taxon>
        <taxon>Artiodactyla</taxon>
        <taxon>Ruminantia</taxon>
        <taxon>Pecora</taxon>
        <taxon>Bovidae</taxon>
        <taxon>Bovinae</taxon>
        <taxon>Bos</taxon>
    </lineage>
</organism>
<keyword id="KW-0007">Acetylation</keyword>
<keyword id="KW-0963">Cytoplasm</keyword>
<keyword id="KW-0967">Endosome</keyword>
<keyword id="KW-0472">Membrane</keyword>
<keyword id="KW-0479">Metal-binding</keyword>
<keyword id="KW-0597">Phosphoprotein</keyword>
<keyword id="KW-0653">Protein transport</keyword>
<keyword id="KW-1185">Reference proteome</keyword>
<keyword id="KW-0813">Transport</keyword>
<keyword id="KW-0832">Ubl conjugation</keyword>
<keyword id="KW-0862">Zinc</keyword>
<keyword id="KW-0863">Zinc-finger</keyword>
<feature type="chain" id="PRO_0000274196" description="Hepatocyte growth factor-regulated tyrosine kinase substrate">
    <location>
        <begin position="1"/>
        <end position="777"/>
    </location>
</feature>
<feature type="domain" description="VHS" evidence="7">
    <location>
        <begin position="15"/>
        <end position="143"/>
    </location>
</feature>
<feature type="domain" description="UIM" evidence="6">
    <location>
        <begin position="258"/>
        <end position="277"/>
    </location>
</feature>
<feature type="zinc finger region" description="FYVE-type" evidence="5">
    <location>
        <begin position="160"/>
        <end position="220"/>
    </location>
</feature>
<feature type="region of interest" description="Disordered" evidence="8">
    <location>
        <begin position="223"/>
        <end position="319"/>
    </location>
</feature>
<feature type="region of interest" description="Interaction with SNX1" evidence="1">
    <location>
        <begin position="225"/>
        <end position="541"/>
    </location>
</feature>
<feature type="region of interest" description="Disordered" evidence="8">
    <location>
        <begin position="338"/>
        <end position="370"/>
    </location>
</feature>
<feature type="region of interest" description="Interaction with SNAP25 and TRAK2" evidence="1">
    <location>
        <begin position="443"/>
        <end position="541"/>
    </location>
</feature>
<feature type="region of interest" description="Interaction with STAM" evidence="3">
    <location>
        <begin position="452"/>
        <end position="570"/>
    </location>
</feature>
<feature type="region of interest" description="Interaction with NF2" evidence="1">
    <location>
        <begin position="478"/>
        <end position="777"/>
    </location>
</feature>
<feature type="region of interest" description="Disordered" evidence="8">
    <location>
        <begin position="645"/>
        <end position="698"/>
    </location>
</feature>
<feature type="region of interest" description="Disordered" evidence="8">
    <location>
        <begin position="712"/>
        <end position="777"/>
    </location>
</feature>
<feature type="compositionally biased region" description="Low complexity" evidence="8">
    <location>
        <begin position="292"/>
        <end position="311"/>
    </location>
</feature>
<feature type="compositionally biased region" description="Low complexity" evidence="8">
    <location>
        <begin position="645"/>
        <end position="658"/>
    </location>
</feature>
<feature type="compositionally biased region" description="Polar residues" evidence="8">
    <location>
        <begin position="659"/>
        <end position="698"/>
    </location>
</feature>
<feature type="compositionally biased region" description="Polar residues" evidence="8">
    <location>
        <begin position="730"/>
        <end position="739"/>
    </location>
</feature>
<feature type="compositionally biased region" description="Low complexity" evidence="8">
    <location>
        <begin position="753"/>
        <end position="777"/>
    </location>
</feature>
<feature type="binding site" evidence="5">
    <location>
        <position position="166"/>
    </location>
    <ligand>
        <name>Zn(2+)</name>
        <dbReference type="ChEBI" id="CHEBI:29105"/>
        <label>1</label>
    </ligand>
</feature>
<feature type="binding site" evidence="5">
    <location>
        <position position="169"/>
    </location>
    <ligand>
        <name>Zn(2+)</name>
        <dbReference type="ChEBI" id="CHEBI:29105"/>
        <label>1</label>
    </ligand>
</feature>
<feature type="binding site" evidence="5">
    <location>
        <position position="182"/>
    </location>
    <ligand>
        <name>Zn(2+)</name>
        <dbReference type="ChEBI" id="CHEBI:29105"/>
        <label>2</label>
    </ligand>
</feature>
<feature type="binding site" evidence="5">
    <location>
        <position position="185"/>
    </location>
    <ligand>
        <name>Zn(2+)</name>
        <dbReference type="ChEBI" id="CHEBI:29105"/>
        <label>2</label>
    </ligand>
</feature>
<feature type="binding site" evidence="5">
    <location>
        <position position="190"/>
    </location>
    <ligand>
        <name>Zn(2+)</name>
        <dbReference type="ChEBI" id="CHEBI:29105"/>
        <label>1</label>
    </ligand>
</feature>
<feature type="binding site" evidence="5">
    <location>
        <position position="193"/>
    </location>
    <ligand>
        <name>Zn(2+)</name>
        <dbReference type="ChEBI" id="CHEBI:29105"/>
        <label>1</label>
    </ligand>
</feature>
<feature type="binding site" evidence="5">
    <location>
        <position position="212"/>
    </location>
    <ligand>
        <name>Zn(2+)</name>
        <dbReference type="ChEBI" id="CHEBI:29105"/>
        <label>2</label>
    </ligand>
</feature>
<feature type="binding site" evidence="5">
    <location>
        <position position="215"/>
    </location>
    <ligand>
        <name>Zn(2+)</name>
        <dbReference type="ChEBI" id="CHEBI:29105"/>
        <label>2</label>
    </ligand>
</feature>
<feature type="modified residue" description="N6-acetyllysine" evidence="2">
    <location>
        <position position="207"/>
    </location>
</feature>
<feature type="modified residue" description="Phosphotyrosine" evidence="3">
    <location>
        <position position="308"/>
    </location>
</feature>
<feature type="modified residue" description="Phosphotyrosine" evidence="3">
    <location>
        <position position="329"/>
    </location>
</feature>
<feature type="modified residue" description="Phosphotyrosine" evidence="3">
    <location>
        <position position="334"/>
    </location>
</feature>
<feature type="modified residue" description="N6-succinyllysine" evidence="3">
    <location>
        <position position="549"/>
    </location>
</feature>
<feature type="sequence conflict" description="In Ref. 2; AAI11314." evidence="9" ref="2">
    <original>D</original>
    <variation>E</variation>
    <location>
        <position position="321"/>
    </location>
</feature>
<feature type="sequence conflict" description="In Ref. 2; AAI11314." evidence="9" ref="2">
    <location>
        <position position="392"/>
    </location>
</feature>
<comment type="function">
    <text evidence="1">Involved in intracellular signal transduction mediated by cytokines and growth factors. When associated with STAM it suppresses DNA signaling upon stimulation by IL-2 and GM-CSF. Could be a direct effector of PI3-kinase in vesicular pathway via early endosomes and may regulate trafficking to early and late endosomes by recruiting clathrin. May concentrate ubiquitinated receptors within clathrin-coated regions. Involved in down-regulation of receptor tyrosine kinase via multivesicular body (MVBs) when complexed with STAM (ESCRT-0 complex). The ESCRT-0 complex binds ubiquitin and acts as a sorting machinery that recognizes ubiquitinated receptors and transfers them to further sequential lysosomal sorting/trafficking processes. May contribute to the efficient recruitment of SMADs to the activin receptor complex. Involved in receptor recycling via its association with the CART complex, a multiprotein complex required for efficient transferrin receptor recycling but not for EGFR degradation (By similarity).</text>
</comment>
<comment type="subunit">
    <text evidence="2 3 4">Component of the ESCRT-0 complex composed of STAM or STAM2 and HGS. Part of a complex at least composed of HSG, STAM2 (or probably STAM) and EPS15. Interacts with STAM. Interacts with STAM2. Interacts with EPS15; the interaction is direct, calcium-dependent and inhibited by SNAP25. Identified in a complex with STAM and LITAF. Found in a complex with STAM and E3 ligase ITCH and DTX3L. Interacts with E3 ligase DTX3L; the interaction brings together STAM and HSG, promotes their recruitment to early endosomes and decreases STAM and HGS ubiquitination by ITCH. Interacts with NF2; the interaction is direct. Interacts with ubiquitin; the interaction is direct. Interacts with VPS37C. Interacts with SMAD1, SMAD2 and SMAD3. Interacts with TSG101; the interaction mediates the association with the ESCRT-I complex. Interacts with SNAP25; the interaction is direct and decreases with addition of increasing concentrations of free calcium. Interacts with SNX1; the interaction is direct. Component of a 550 kDa membrane complex at least composed of HGS and SNX1 but excluding EGFR. Interacts with TRAK1. Interacts with TRAK2. Component of the CART complex, at least composed of ACTN4, HGS/HRS, MYO5B and TRIM3. Interacts (via UIM domain) with UBQLN1 (via ubiquitin-like domain). Interacts with ARRDC3. Identified in a complex containing at least ARRDC4, AVPR2 and HGS. Interacts with LAPTM4B; promotes HGS ubiquitination (By similarity).</text>
</comment>
<comment type="subcellular location">
    <subcellularLocation>
        <location evidence="4">Cytoplasm</location>
    </subcellularLocation>
    <subcellularLocation>
        <location evidence="4">Early endosome membrane</location>
        <topology evidence="4">Peripheral membrane protein</topology>
        <orientation evidence="4">Cytoplasmic side</orientation>
    </subcellularLocation>
    <subcellularLocation>
        <location evidence="4">Endosome</location>
        <location evidence="4">Multivesicular body membrane</location>
        <topology evidence="4">Peripheral membrane protein</topology>
    </subcellularLocation>
    <text evidence="2">Colocalizes with UBQLN1 in ubiquitin-rich cytoplasmic aggregates that are not endocytic compartments.</text>
</comment>
<comment type="domain">
    <text evidence="1">Has a double-sided UIM that can bind 2 ubiquitin molecules, one on each side of the helix.</text>
</comment>
<comment type="domain">
    <text evidence="1">The FYVE-type zinc finger domain mediates interactions with phosphatidylinositol 3-phosphate in membranes of early endosomes and penetrates bilayers. The FYVE domain insertion into PtdIns(3)P-enriched membranes is substantially increased in acidic conditions (By similarity).</text>
</comment>
<comment type="PTM">
    <text evidence="3">Phosphorylated on Tyr-334. A minor site of phosphorylation on Tyr-329 is detected (By similarity). Phosphorylation occurs in response to EGF, IL-2, GM-CSF and HGF.</text>
</comment>
<comment type="PTM">
    <text evidence="2">Ubiquitinated by ITCH.</text>
</comment>
<reference key="1">
    <citation type="journal article" date="2005" name="BMC Genomics">
        <title>Characterization of 954 bovine full-CDS cDNA sequences.</title>
        <authorList>
            <person name="Harhay G.P."/>
            <person name="Sonstegard T.S."/>
            <person name="Keele J.W."/>
            <person name="Heaton M.P."/>
            <person name="Clawson M.L."/>
            <person name="Snelling W.M."/>
            <person name="Wiedmann R.T."/>
            <person name="Van Tassell C.P."/>
            <person name="Smith T.P.L."/>
        </authorList>
    </citation>
    <scope>NUCLEOTIDE SEQUENCE [LARGE SCALE MRNA]</scope>
</reference>
<reference key="2">
    <citation type="submission" date="2005-12" db="EMBL/GenBank/DDBJ databases">
        <authorList>
            <consortium name="NIH - Mammalian Gene Collection (MGC) project"/>
        </authorList>
    </citation>
    <scope>NUCLEOTIDE SEQUENCE [LARGE SCALE MRNA]</scope>
    <source>
        <strain>Crossbred X Angus</strain>
        <tissue>Liver</tissue>
    </source>
</reference>